<accession>A5E058</accession>
<evidence type="ECO:0000250" key="1"/>
<evidence type="ECO:0000255" key="2"/>
<evidence type="ECO:0000255" key="3">
    <source>
        <dbReference type="PROSITE-ProRule" id="PRU00541"/>
    </source>
</evidence>
<evidence type="ECO:0000255" key="4">
    <source>
        <dbReference type="PROSITE-ProRule" id="PRU00542"/>
    </source>
</evidence>
<evidence type="ECO:0000256" key="5">
    <source>
        <dbReference type="SAM" id="MobiDB-lite"/>
    </source>
</evidence>
<evidence type="ECO:0000305" key="6"/>
<name>PRP5_LODEL</name>
<organism>
    <name type="scientific">Lodderomyces elongisporus (strain ATCC 11503 / CBS 2605 / JCM 1781 / NBRC 1676 / NRRL YB-4239)</name>
    <name type="common">Yeast</name>
    <name type="synonym">Saccharomyces elongisporus</name>
    <dbReference type="NCBI Taxonomy" id="379508"/>
    <lineage>
        <taxon>Eukaryota</taxon>
        <taxon>Fungi</taxon>
        <taxon>Dikarya</taxon>
        <taxon>Ascomycota</taxon>
        <taxon>Saccharomycotina</taxon>
        <taxon>Pichiomycetes</taxon>
        <taxon>Debaryomycetaceae</taxon>
        <taxon>Candida/Lodderomyces clade</taxon>
        <taxon>Lodderomyces</taxon>
    </lineage>
</organism>
<comment type="function">
    <text evidence="1">ATP-dependent RNA helicase involved spliceosome assembly and in nuclear splicing. Catalyzes an ATP-dependent conformational change of U2 snRNP. Bridges U1 and U2 snRNPs and enables stable U2 snRNP association with intron RNA (By similarity).</text>
</comment>
<comment type="catalytic activity">
    <reaction>
        <text>ATP + H2O = ADP + phosphate + H(+)</text>
        <dbReference type="Rhea" id="RHEA:13065"/>
        <dbReference type="ChEBI" id="CHEBI:15377"/>
        <dbReference type="ChEBI" id="CHEBI:15378"/>
        <dbReference type="ChEBI" id="CHEBI:30616"/>
        <dbReference type="ChEBI" id="CHEBI:43474"/>
        <dbReference type="ChEBI" id="CHEBI:456216"/>
        <dbReference type="EC" id="3.6.4.13"/>
    </reaction>
</comment>
<comment type="subcellular location">
    <subcellularLocation>
        <location evidence="1">Nucleus</location>
    </subcellularLocation>
</comment>
<comment type="domain">
    <text>The Q motif is unique to and characteristic of the DEAD box family of RNA helicases and controls ATP binding and hydrolysis.</text>
</comment>
<comment type="similarity">
    <text evidence="6">Belongs to the DEAD box helicase family. DDX46/PRP5 subfamily.</text>
</comment>
<proteinExistence type="inferred from homology"/>
<gene>
    <name type="primary">PRP5</name>
    <name type="ORF">LELG_02995</name>
</gene>
<feature type="chain" id="PRO_0000294648" description="Pre-mRNA-processing ATP-dependent RNA helicase PRP5">
    <location>
        <begin position="1"/>
        <end position="994"/>
    </location>
</feature>
<feature type="domain" description="Helicase ATP-binding" evidence="3">
    <location>
        <begin position="419"/>
        <end position="597"/>
    </location>
</feature>
<feature type="domain" description="Helicase C-terminal" evidence="4">
    <location>
        <begin position="629"/>
        <end position="780"/>
    </location>
</feature>
<feature type="region of interest" description="Disordered" evidence="5">
    <location>
        <begin position="1"/>
        <end position="105"/>
    </location>
</feature>
<feature type="region of interest" description="Disordered" evidence="5">
    <location>
        <begin position="170"/>
        <end position="190"/>
    </location>
</feature>
<feature type="region of interest" description="Disordered" evidence="5">
    <location>
        <begin position="235"/>
        <end position="275"/>
    </location>
</feature>
<feature type="region of interest" description="Disordered" evidence="5">
    <location>
        <begin position="842"/>
        <end position="867"/>
    </location>
</feature>
<feature type="coiled-coil region" evidence="2">
    <location>
        <begin position="20"/>
        <end position="87"/>
    </location>
</feature>
<feature type="coiled-coil region" evidence="2">
    <location>
        <begin position="217"/>
        <end position="284"/>
    </location>
</feature>
<feature type="coiled-coil region" evidence="2">
    <location>
        <begin position="310"/>
        <end position="382"/>
    </location>
</feature>
<feature type="short sequence motif" description="Q motif">
    <location>
        <begin position="387"/>
        <end position="416"/>
    </location>
</feature>
<feature type="short sequence motif" description="DEAD box">
    <location>
        <begin position="545"/>
        <end position="548"/>
    </location>
</feature>
<feature type="compositionally biased region" description="Polar residues" evidence="5">
    <location>
        <begin position="1"/>
        <end position="18"/>
    </location>
</feature>
<feature type="compositionally biased region" description="Basic and acidic residues" evidence="5">
    <location>
        <begin position="20"/>
        <end position="32"/>
    </location>
</feature>
<feature type="compositionally biased region" description="Basic and acidic residues" evidence="5">
    <location>
        <begin position="70"/>
        <end position="79"/>
    </location>
</feature>
<feature type="compositionally biased region" description="Polar residues" evidence="5">
    <location>
        <begin position="84"/>
        <end position="102"/>
    </location>
</feature>
<feature type="compositionally biased region" description="Basic and acidic residues" evidence="5">
    <location>
        <begin position="172"/>
        <end position="181"/>
    </location>
</feature>
<feature type="compositionally biased region" description="Polar residues" evidence="5">
    <location>
        <begin position="235"/>
        <end position="245"/>
    </location>
</feature>
<feature type="compositionally biased region" description="Low complexity" evidence="5">
    <location>
        <begin position="845"/>
        <end position="867"/>
    </location>
</feature>
<feature type="binding site" evidence="3">
    <location>
        <begin position="432"/>
        <end position="439"/>
    </location>
    <ligand>
        <name>ATP</name>
        <dbReference type="ChEBI" id="CHEBI:30616"/>
    </ligand>
</feature>
<keyword id="KW-0067">ATP-binding</keyword>
<keyword id="KW-0175">Coiled coil</keyword>
<keyword id="KW-0347">Helicase</keyword>
<keyword id="KW-0378">Hydrolase</keyword>
<keyword id="KW-0507">mRNA processing</keyword>
<keyword id="KW-0508">mRNA splicing</keyword>
<keyword id="KW-0547">Nucleotide-binding</keyword>
<keyword id="KW-0539">Nucleus</keyword>
<keyword id="KW-1185">Reference proteome</keyword>
<protein>
    <recommendedName>
        <fullName>Pre-mRNA-processing ATP-dependent RNA helicase PRP5</fullName>
        <ecNumber>3.6.4.13</ecNumber>
    </recommendedName>
</protein>
<sequence>MTLPSGDSSITNNTNQTLNEDEKRRLRREKLAALRQKKLAEAQNGEGNKRQEGNGNGTGQGTGNVAADLTTKRNEKQKVENSFAKLNSTSIDHSSTETQATSLEEKQRLLLKRQGQRIEDWKKNRSADTASHFPQRAKENLSHTRIAITKKSTFKLPKIKRNNNKRVFGFVNEDKEGGGGKEEEDEEEEFTKKKILKIANDDARDYLNYGEKFRKPVLEEAEDDLDQFIESISKSESFVDNNNGGKQVQEQNVEEEKQQQQQQQLEQEQEQEQEQLEKLPRYLAVNNNNNEDTDEVYRYEEDFDDEFDEDDEDDINKRLSAKLNKLQNTAKELKEIDHTSIEYPKFRKHFYQVPFEMSTMDNRELDMLRLELDNVRARGKNVPPPFLTWGQLLMPESVMSVIQNDLGFAKPSPIQCQAIPIVLSGRDMIGVAKTGSGKTLSYVLPMVRHIQDQLFPKPGEGPIGLVLSPTRELALQIEKEILKFSSTMDLKVCCCYGGSNIENQISELKRGVNVIVATPGRLIDLLAANGGRITTLRRTTFVVLDEADRMFDMGFEPQIQKIFTQIRPDKQTVLFSATFPRKLEQLAKKVLHNPIEIIVGGVSVVASEISQEIILFEDTDQLMNHKIQKLEDILSRFFDLGKNTGKVLVFVEKQTDADKLVSVLLKKAIPCIAIHGGKDQIDRKHAIREFSDDQSGINVLIATSIAARGLDVRNLDLVVNFEPPSHLEDYVHRVGRTGRAGKHGEAITFVDNTQEKEISILVKALKMSSRAVDSKLQEIADKFMKKIESGEEKRSSGFGGKGLEKLQNVRETNMQLQKKMFGNFKKEDGKKSHRDLSEQVDYFGSSSSSSSFPSSSNTTTTTTTTSTASAIEIPTFEIIEGNSPETSGPDKCKFYCRVTINDLPQKVRWGIVQRESLSKIIEASKTSITTRGQFYPPQSKQTPTNDQPKLYLLIEGLTRKAVEEAAVLIRDKMLQGVEAMRLDNHSAPTGRYVV</sequence>
<reference key="1">
    <citation type="journal article" date="2009" name="Nature">
        <title>Evolution of pathogenicity and sexual reproduction in eight Candida genomes.</title>
        <authorList>
            <person name="Butler G."/>
            <person name="Rasmussen M.D."/>
            <person name="Lin M.F."/>
            <person name="Santos M.A.S."/>
            <person name="Sakthikumar S."/>
            <person name="Munro C.A."/>
            <person name="Rheinbay E."/>
            <person name="Grabherr M."/>
            <person name="Forche A."/>
            <person name="Reedy J.L."/>
            <person name="Agrafioti I."/>
            <person name="Arnaud M.B."/>
            <person name="Bates S."/>
            <person name="Brown A.J.P."/>
            <person name="Brunke S."/>
            <person name="Costanzo M.C."/>
            <person name="Fitzpatrick D.A."/>
            <person name="de Groot P.W.J."/>
            <person name="Harris D."/>
            <person name="Hoyer L.L."/>
            <person name="Hube B."/>
            <person name="Klis F.M."/>
            <person name="Kodira C."/>
            <person name="Lennard N."/>
            <person name="Logue M.E."/>
            <person name="Martin R."/>
            <person name="Neiman A.M."/>
            <person name="Nikolaou E."/>
            <person name="Quail M.A."/>
            <person name="Quinn J."/>
            <person name="Santos M.C."/>
            <person name="Schmitzberger F.F."/>
            <person name="Sherlock G."/>
            <person name="Shah P."/>
            <person name="Silverstein K.A.T."/>
            <person name="Skrzypek M.S."/>
            <person name="Soll D."/>
            <person name="Staggs R."/>
            <person name="Stansfield I."/>
            <person name="Stumpf M.P.H."/>
            <person name="Sudbery P.E."/>
            <person name="Srikantha T."/>
            <person name="Zeng Q."/>
            <person name="Berman J."/>
            <person name="Berriman M."/>
            <person name="Heitman J."/>
            <person name="Gow N.A.R."/>
            <person name="Lorenz M.C."/>
            <person name="Birren B.W."/>
            <person name="Kellis M."/>
            <person name="Cuomo C.A."/>
        </authorList>
    </citation>
    <scope>NUCLEOTIDE SEQUENCE [LARGE SCALE GENOMIC DNA]</scope>
    <source>
        <strain>ATCC 11503 / BCRC 21390 / CBS 2605 / JCM 1781 / NBRC 1676 / NRRL YB-4239</strain>
    </source>
</reference>
<dbReference type="EC" id="3.6.4.13"/>
<dbReference type="EMBL" id="CH981526">
    <property type="protein sequence ID" value="EDK44816.1"/>
    <property type="molecule type" value="Genomic_DNA"/>
</dbReference>
<dbReference type="RefSeq" id="XP_001526437.1">
    <property type="nucleotide sequence ID" value="XM_001526387.1"/>
</dbReference>
<dbReference type="SMR" id="A5E058"/>
<dbReference type="FunCoup" id="A5E058">
    <property type="interactions" value="1013"/>
</dbReference>
<dbReference type="STRING" id="379508.A5E058"/>
<dbReference type="GeneID" id="5233354"/>
<dbReference type="KEGG" id="lel:PVL30_003822"/>
<dbReference type="VEuPathDB" id="FungiDB:LELG_02995"/>
<dbReference type="eggNOG" id="KOG0334">
    <property type="taxonomic scope" value="Eukaryota"/>
</dbReference>
<dbReference type="HOGENOM" id="CLU_003041_0_2_1"/>
<dbReference type="InParanoid" id="A5E058"/>
<dbReference type="OMA" id="FAQYVHT"/>
<dbReference type="OrthoDB" id="196131at2759"/>
<dbReference type="Proteomes" id="UP000001996">
    <property type="component" value="Unassembled WGS sequence"/>
</dbReference>
<dbReference type="GO" id="GO:0005634">
    <property type="term" value="C:nucleus"/>
    <property type="evidence" value="ECO:0007669"/>
    <property type="project" value="UniProtKB-SubCell"/>
</dbReference>
<dbReference type="GO" id="GO:0005524">
    <property type="term" value="F:ATP binding"/>
    <property type="evidence" value="ECO:0007669"/>
    <property type="project" value="UniProtKB-KW"/>
</dbReference>
<dbReference type="GO" id="GO:0016887">
    <property type="term" value="F:ATP hydrolysis activity"/>
    <property type="evidence" value="ECO:0007669"/>
    <property type="project" value="RHEA"/>
</dbReference>
<dbReference type="GO" id="GO:0003676">
    <property type="term" value="F:nucleic acid binding"/>
    <property type="evidence" value="ECO:0007669"/>
    <property type="project" value="InterPro"/>
</dbReference>
<dbReference type="GO" id="GO:0003724">
    <property type="term" value="F:RNA helicase activity"/>
    <property type="evidence" value="ECO:0007669"/>
    <property type="project" value="UniProtKB-EC"/>
</dbReference>
<dbReference type="GO" id="GO:0006397">
    <property type="term" value="P:mRNA processing"/>
    <property type="evidence" value="ECO:0007669"/>
    <property type="project" value="UniProtKB-KW"/>
</dbReference>
<dbReference type="GO" id="GO:0008380">
    <property type="term" value="P:RNA splicing"/>
    <property type="evidence" value="ECO:0007669"/>
    <property type="project" value="UniProtKB-KW"/>
</dbReference>
<dbReference type="CDD" id="cd17953">
    <property type="entry name" value="DEADc_DDX46"/>
    <property type="match status" value="1"/>
</dbReference>
<dbReference type="CDD" id="cd22474">
    <property type="entry name" value="KH-I_PRP5_like"/>
    <property type="match status" value="1"/>
</dbReference>
<dbReference type="CDD" id="cd18787">
    <property type="entry name" value="SF2_C_DEAD"/>
    <property type="match status" value="1"/>
</dbReference>
<dbReference type="FunFam" id="3.40.50.300:FF:000079">
    <property type="entry name" value="probable ATP-dependent RNA helicase DDX17"/>
    <property type="match status" value="1"/>
</dbReference>
<dbReference type="Gene3D" id="3.40.50.300">
    <property type="entry name" value="P-loop containing nucleotide triphosphate hydrolases"/>
    <property type="match status" value="2"/>
</dbReference>
<dbReference type="InterPro" id="IPR011545">
    <property type="entry name" value="DEAD/DEAH_box_helicase_dom"/>
</dbReference>
<dbReference type="InterPro" id="IPR014001">
    <property type="entry name" value="Helicase_ATP-bd"/>
</dbReference>
<dbReference type="InterPro" id="IPR001650">
    <property type="entry name" value="Helicase_C-like"/>
</dbReference>
<dbReference type="InterPro" id="IPR027417">
    <property type="entry name" value="P-loop_NTPase"/>
</dbReference>
<dbReference type="InterPro" id="IPR056149">
    <property type="entry name" value="PRP5/DDX46/KHDC4_KH"/>
</dbReference>
<dbReference type="InterPro" id="IPR000629">
    <property type="entry name" value="RNA-helicase_DEAD-box_CS"/>
</dbReference>
<dbReference type="InterPro" id="IPR014014">
    <property type="entry name" value="RNA_helicase_DEAD_Q_motif"/>
</dbReference>
<dbReference type="PANTHER" id="PTHR47958">
    <property type="entry name" value="ATP-DEPENDENT RNA HELICASE DBP3"/>
    <property type="match status" value="1"/>
</dbReference>
<dbReference type="Pfam" id="PF00270">
    <property type="entry name" value="DEAD"/>
    <property type="match status" value="1"/>
</dbReference>
<dbReference type="Pfam" id="PF00271">
    <property type="entry name" value="Helicase_C"/>
    <property type="match status" value="1"/>
</dbReference>
<dbReference type="Pfam" id="PF23469">
    <property type="entry name" value="KH_12"/>
    <property type="match status" value="1"/>
</dbReference>
<dbReference type="SMART" id="SM00487">
    <property type="entry name" value="DEXDc"/>
    <property type="match status" value="1"/>
</dbReference>
<dbReference type="SMART" id="SM00490">
    <property type="entry name" value="HELICc"/>
    <property type="match status" value="1"/>
</dbReference>
<dbReference type="SUPFAM" id="SSF52540">
    <property type="entry name" value="P-loop containing nucleoside triphosphate hydrolases"/>
    <property type="match status" value="2"/>
</dbReference>
<dbReference type="PROSITE" id="PS00039">
    <property type="entry name" value="DEAD_ATP_HELICASE"/>
    <property type="match status" value="1"/>
</dbReference>
<dbReference type="PROSITE" id="PS51192">
    <property type="entry name" value="HELICASE_ATP_BIND_1"/>
    <property type="match status" value="1"/>
</dbReference>
<dbReference type="PROSITE" id="PS51194">
    <property type="entry name" value="HELICASE_CTER"/>
    <property type="match status" value="1"/>
</dbReference>
<dbReference type="PROSITE" id="PS51195">
    <property type="entry name" value="Q_MOTIF"/>
    <property type="match status" value="1"/>
</dbReference>